<comment type="function">
    <text evidence="1 2">Component of the HPA decarboxylase that decarboxylates phenylacetates with a hydroxyl group in the p-position. Active toward 4-hydroxyphenylacetate and 3,4-dihydroxyphenylacetate, forming 4-methylphenol and 4-methylcatechol, respectively. Is likely involved in the catabolism of aromatic amino acids such as tyrosine fermentation. 4-methylphenol (p-cresol) formation provides metabolic toxicity, which allows an active suppression of other microbes and may provide growth advantages for the producers in highly competitive environments (PubMed:16878993). The small subunit is essential for enzymatic activity of HPA decarboxylase, and also seems to be involved in the regulation of the enzyme oligomeric state and catalytic activity (By similarity).</text>
</comment>
<comment type="catalytic activity">
    <reaction evidence="2">
        <text>4-hydroxyphenylacetate + H(+) = 4-methylphenol + CO2</text>
        <dbReference type="Rhea" id="RHEA:22732"/>
        <dbReference type="ChEBI" id="CHEBI:15378"/>
        <dbReference type="ChEBI" id="CHEBI:16526"/>
        <dbReference type="ChEBI" id="CHEBI:17847"/>
        <dbReference type="ChEBI" id="CHEBI:48999"/>
        <dbReference type="EC" id="4.1.1.83"/>
    </reaction>
    <physiologicalReaction direction="left-to-right" evidence="6">
        <dbReference type="Rhea" id="RHEA:22733"/>
    </physiologicalReaction>
</comment>
<comment type="catalytic activity">
    <reaction evidence="2">
        <text>3,4-dihydroxyphenylacetate + H(+) = 4-methylcatechol + CO2</text>
        <dbReference type="Rhea" id="RHEA:62556"/>
        <dbReference type="ChEBI" id="CHEBI:15378"/>
        <dbReference type="ChEBI" id="CHEBI:16526"/>
        <dbReference type="ChEBI" id="CHEBI:17254"/>
        <dbReference type="ChEBI" id="CHEBI:17612"/>
        <dbReference type="EC" id="4.1.1.83"/>
    </reaction>
    <physiologicalReaction direction="left-to-right" evidence="6">
        <dbReference type="Rhea" id="RHEA:62557"/>
    </physiologicalReaction>
</comment>
<comment type="cofactor">
    <cofactor evidence="2 3">
        <name>[4Fe-4S] cluster</name>
        <dbReference type="ChEBI" id="CHEBI:49883"/>
    </cofactor>
    <text evidence="2 3">Binds 2 [4Fe-4S] clusters per subunit.</text>
</comment>
<comment type="subunit">
    <text evidence="2 3">Heterooctamer consisting of 4 large (HpdB) subunits and 4 small (HpdC) subunits, arranged as a tetramer of heterodimers.</text>
</comment>
<comment type="similarity">
    <text evidence="5">Belongs to the HPA decarboxylase small subunit family.</text>
</comment>
<gene>
    <name evidence="7" type="primary">csdC</name>
</gene>
<protein>
    <recommendedName>
        <fullName evidence="6">4-hydroxyphenylacetate decarboxylase small subunit</fullName>
        <shortName>HPA decarboxylase small subunit</shortName>
        <ecNumber evidence="2">4.1.1.83</ecNumber>
    </recommendedName>
    <alternativeName>
        <fullName evidence="4">4-hydroxyphenylacetate decarboxylase gamma subunit</fullName>
    </alternativeName>
    <alternativeName>
        <fullName evidence="6">p-hydroxyphenylacetate decarboxylase small subunit</fullName>
    </alternativeName>
</protein>
<feature type="chain" id="PRO_0000403696" description="4-hydroxyphenylacetate decarboxylase small subunit">
    <location>
        <begin position="1"/>
        <end position="86"/>
    </location>
</feature>
<feature type="binding site" evidence="3 8 9">
    <location>
        <position position="3"/>
    </location>
    <ligand>
        <name>[4Fe-4S] cluster</name>
        <dbReference type="ChEBI" id="CHEBI:49883"/>
        <label>1</label>
    </ligand>
</feature>
<feature type="binding site" evidence="3 8 9">
    <location>
        <position position="6"/>
    </location>
    <ligand>
        <name>[4Fe-4S] cluster</name>
        <dbReference type="ChEBI" id="CHEBI:49883"/>
        <label>1</label>
    </ligand>
</feature>
<feature type="binding site" evidence="3 8 9">
    <location>
        <position position="19"/>
    </location>
    <ligand>
        <name>[4Fe-4S] cluster</name>
        <dbReference type="ChEBI" id="CHEBI:49883"/>
        <label>1</label>
    </ligand>
</feature>
<feature type="binding site" evidence="3 8 9">
    <location>
        <position position="36"/>
    </location>
    <ligand>
        <name>[4Fe-4S] cluster</name>
        <dbReference type="ChEBI" id="CHEBI:49883"/>
        <label>1</label>
    </ligand>
</feature>
<feature type="binding site" evidence="3 8 9">
    <location>
        <position position="45"/>
    </location>
    <ligand>
        <name>[4Fe-4S] cluster</name>
        <dbReference type="ChEBI" id="CHEBI:49883"/>
        <label>2</label>
    </ligand>
</feature>
<feature type="binding site" evidence="3 8 9">
    <location>
        <position position="48"/>
    </location>
    <ligand>
        <name>[4Fe-4S] cluster</name>
        <dbReference type="ChEBI" id="CHEBI:49883"/>
        <label>2</label>
    </ligand>
</feature>
<feature type="binding site" evidence="3 8 9">
    <location>
        <position position="62"/>
    </location>
    <ligand>
        <name>[4Fe-4S] cluster</name>
        <dbReference type="ChEBI" id="CHEBI:49883"/>
        <label>2</label>
    </ligand>
</feature>
<feature type="binding site" evidence="3 8 9">
    <location>
        <position position="80"/>
    </location>
    <ligand>
        <name>[4Fe-4S] cluster</name>
        <dbReference type="ChEBI" id="CHEBI:49883"/>
        <label>2</label>
    </ligand>
</feature>
<feature type="helix" evidence="10">
    <location>
        <begin position="3"/>
        <end position="5"/>
    </location>
</feature>
<feature type="strand" evidence="10">
    <location>
        <begin position="9"/>
        <end position="11"/>
    </location>
</feature>
<feature type="strand" evidence="10">
    <location>
        <begin position="13"/>
        <end position="19"/>
    </location>
</feature>
<feature type="turn" evidence="10">
    <location>
        <begin position="20"/>
        <end position="22"/>
    </location>
</feature>
<feature type="strand" evidence="10">
    <location>
        <begin position="25"/>
        <end position="30"/>
    </location>
</feature>
<feature type="helix" evidence="10">
    <location>
        <begin position="45"/>
        <end position="47"/>
    </location>
</feature>
<feature type="strand" evidence="10">
    <location>
        <begin position="58"/>
        <end position="62"/>
    </location>
</feature>
<feature type="strand" evidence="10">
    <location>
        <begin position="64"/>
        <end position="67"/>
    </location>
</feature>
<feature type="strand" evidence="10">
    <location>
        <begin position="69"/>
        <end position="72"/>
    </location>
</feature>
<dbReference type="EC" id="4.1.1.83" evidence="2"/>
<dbReference type="EMBL" id="DQ227741">
    <property type="protein sequence ID" value="ABB05047.1"/>
    <property type="molecule type" value="Genomic_DNA"/>
</dbReference>
<dbReference type="RefSeq" id="WP_029163540.1">
    <property type="nucleotide sequence ID" value="NZ_CP009933.1"/>
</dbReference>
<dbReference type="PDB" id="2Y8N">
    <property type="method" value="X-ray"/>
    <property type="resolution" value="1.75 A"/>
    <property type="chains" value="B/D=1-86"/>
</dbReference>
<dbReference type="PDB" id="2YAJ">
    <property type="method" value="X-ray"/>
    <property type="resolution" value="1.81 A"/>
    <property type="chains" value="B/D=1-86"/>
</dbReference>
<dbReference type="PDBsum" id="2Y8N"/>
<dbReference type="PDBsum" id="2YAJ"/>
<dbReference type="SMR" id="Q38HX3"/>
<dbReference type="STRING" id="1548.CSCA_5036"/>
<dbReference type="SABIO-RK" id="Q38HX3"/>
<dbReference type="GO" id="GO:0051539">
    <property type="term" value="F:4 iron, 4 sulfur cluster binding"/>
    <property type="evidence" value="ECO:0007669"/>
    <property type="project" value="UniProtKB-KW"/>
</dbReference>
<dbReference type="GO" id="GO:0043722">
    <property type="term" value="F:4-hydroxyphenylacetate decarboxylase activity"/>
    <property type="evidence" value="ECO:0007669"/>
    <property type="project" value="UniProtKB-EC"/>
</dbReference>
<dbReference type="GO" id="GO:0046872">
    <property type="term" value="F:metal ion binding"/>
    <property type="evidence" value="ECO:0007669"/>
    <property type="project" value="UniProtKB-KW"/>
</dbReference>
<dbReference type="Gene3D" id="2.20.70.100">
    <property type="match status" value="2"/>
</dbReference>
<dbReference type="InterPro" id="IPR041125">
    <property type="entry name" value="4HPAD_g_N"/>
</dbReference>
<dbReference type="InterPro" id="IPR053727">
    <property type="entry name" value="HPA_decarboxylase_ss_sf"/>
</dbReference>
<dbReference type="InterPro" id="IPR040923">
    <property type="entry name" value="HpdC_C"/>
</dbReference>
<dbReference type="NCBIfam" id="NF033716">
    <property type="entry name" value="glycyl_HPDL_Sma"/>
    <property type="match status" value="1"/>
</dbReference>
<dbReference type="Pfam" id="PF18671">
    <property type="entry name" value="4HPAD_g_N"/>
    <property type="match status" value="1"/>
</dbReference>
<dbReference type="Pfam" id="PF18524">
    <property type="entry name" value="HPIP_like"/>
    <property type="match status" value="1"/>
</dbReference>
<reference key="1">
    <citation type="journal article" date="2006" name="Biochemistry">
        <title>4-Hydroxyphenylacetate decarboxylases: properties of a novel subclass of glycyl radical enzyme systems.</title>
        <authorList>
            <person name="Yu L."/>
            <person name="Blaser M."/>
            <person name="Andrei P.I."/>
            <person name="Pierik A.J."/>
            <person name="Selmer T."/>
        </authorList>
    </citation>
    <scope>NUCLEOTIDE SEQUENCE [GENOMIC DNA]</scope>
    <scope>FUNCTION</scope>
    <scope>CATALYTIC ACTIVITY</scope>
    <scope>COFACTOR</scope>
    <scope>BIOPHYSICOCHEMICAL PROPERTIES</scope>
    <scope>SUBUNIT</scope>
    <source>
        <strain evidence="7">ATCC 25775 / DSM 757 / JCM 1414 / NCIB 8855 / VPI 5393</strain>
    </source>
</reference>
<reference evidence="8 9" key="2">
    <citation type="journal article" date="2011" name="J. Am. Chem. Soc.">
        <title>Structural basis for a Kolbe-type decarboxylation catalyzed by a glycyl radical enzyme.</title>
        <authorList>
            <person name="Martins B.M."/>
            <person name="Blaser M."/>
            <person name="Feliks M."/>
            <person name="Ullmann G.M."/>
            <person name="Buckel W."/>
            <person name="Selmer T."/>
        </authorList>
    </citation>
    <scope>X-RAY CRYSTALLOGRAPHY (1.75 ANGSTROMS) IN COMPLEX WITH HPA DECARBOXYLASE LARGE SUBUNIT AND IRON-SULFUR (4FE-4S) CLUSTERS</scope>
    <scope>COFACTOR</scope>
    <scope>SUBUNIT</scope>
    <scope>REACTION MECHANISM</scope>
</reference>
<sequence>MRHYDCKNYINLDCEKGLCALTKGMVPIDGEGSEACPNFKPAEKCGNCKNFCNPDKYGLGTCTGLEKENWAYATCGASACPSYKAE</sequence>
<keyword id="KW-0002">3D-structure</keyword>
<keyword id="KW-0004">4Fe-4S</keyword>
<keyword id="KW-0408">Iron</keyword>
<keyword id="KW-0411">Iron-sulfur</keyword>
<keyword id="KW-0456">Lyase</keyword>
<keyword id="KW-0479">Metal-binding</keyword>
<name>HPDS_CLOSL</name>
<proteinExistence type="evidence at protein level"/>
<organism>
    <name type="scientific">Clostridium scatologenes</name>
    <dbReference type="NCBI Taxonomy" id="1548"/>
    <lineage>
        <taxon>Bacteria</taxon>
        <taxon>Bacillati</taxon>
        <taxon>Bacillota</taxon>
        <taxon>Clostridia</taxon>
        <taxon>Eubacteriales</taxon>
        <taxon>Clostridiaceae</taxon>
        <taxon>Clostridium</taxon>
    </lineage>
</organism>
<evidence type="ECO:0000250" key="1">
    <source>
        <dbReference type="UniProtKB" id="Q84F15"/>
    </source>
</evidence>
<evidence type="ECO:0000269" key="2">
    <source>
    </source>
</evidence>
<evidence type="ECO:0000269" key="3">
    <source>
    </source>
</evidence>
<evidence type="ECO:0000303" key="4">
    <source>
    </source>
</evidence>
<evidence type="ECO:0000305" key="5"/>
<evidence type="ECO:0000305" key="6">
    <source>
    </source>
</evidence>
<evidence type="ECO:0000312" key="7">
    <source>
        <dbReference type="EMBL" id="ABB05047.1"/>
    </source>
</evidence>
<evidence type="ECO:0007744" key="8">
    <source>
        <dbReference type="PDB" id="2Y8N"/>
    </source>
</evidence>
<evidence type="ECO:0007744" key="9">
    <source>
        <dbReference type="PDB" id="2YAJ"/>
    </source>
</evidence>
<evidence type="ECO:0007829" key="10">
    <source>
        <dbReference type="PDB" id="2Y8N"/>
    </source>
</evidence>
<accession>Q38HX3</accession>